<organism>
    <name type="scientific">Styela plicata</name>
    <name type="common">Wrinkled sea squirt</name>
    <name type="synonym">Ascidia plicata</name>
    <dbReference type="NCBI Taxonomy" id="7726"/>
    <lineage>
        <taxon>Eukaryota</taxon>
        <taxon>Metazoa</taxon>
        <taxon>Chordata</taxon>
        <taxon>Tunicata</taxon>
        <taxon>Ascidiacea</taxon>
        <taxon>Stolidobranchia</taxon>
        <taxon>Styelidae</taxon>
        <taxon>Styela</taxon>
    </lineage>
</organism>
<keyword id="KW-0378">Hydrolase</keyword>
<keyword id="KW-0904">Protein phosphatase</keyword>
<sequence>QESTVIVMLTRVNENGRRKCEKYWPDHREQTTFDNLIVSSINVSEYGQIIKRSFQLWNPNQPGKKLLVEQFHYITWPDHGVPITTSDLFNLRRMVIESQGNNPSPIIV</sequence>
<feature type="chain" id="PRO_0000094893" description="Tyrosine-protein phosphatase 5">
    <location>
        <begin position="1" status="less than"/>
        <end position="108" status="greater than"/>
    </location>
</feature>
<feature type="domain" description="Tyrosine-protein phosphatase" evidence="2">
    <location>
        <begin position="1" status="less than"/>
        <end position="108" status="greater than"/>
    </location>
</feature>
<feature type="binding site" evidence="1">
    <location>
        <position position="78"/>
    </location>
    <ligand>
        <name>substrate</name>
    </ligand>
</feature>
<feature type="non-terminal residue">
    <location>
        <position position="1"/>
    </location>
</feature>
<feature type="non-terminal residue">
    <location>
        <position position="108"/>
    </location>
</feature>
<dbReference type="EC" id="3.1.3.48"/>
<dbReference type="EMBL" id="M37990">
    <property type="protein sequence ID" value="AAA29823.1"/>
    <property type="molecule type" value="mRNA"/>
</dbReference>
<dbReference type="SMR" id="P28197"/>
<dbReference type="GO" id="GO:0004725">
    <property type="term" value="F:protein tyrosine phosphatase activity"/>
    <property type="evidence" value="ECO:0007669"/>
    <property type="project" value="UniProtKB-EC"/>
</dbReference>
<dbReference type="CDD" id="cd00047">
    <property type="entry name" value="PTPc"/>
    <property type="match status" value="1"/>
</dbReference>
<dbReference type="Gene3D" id="3.90.190.10">
    <property type="entry name" value="Protein tyrosine phosphatase superfamily"/>
    <property type="match status" value="1"/>
</dbReference>
<dbReference type="InterPro" id="IPR029021">
    <property type="entry name" value="Prot-tyrosine_phosphatase-like"/>
</dbReference>
<dbReference type="InterPro" id="IPR050348">
    <property type="entry name" value="Protein-Tyr_Phosphatase"/>
</dbReference>
<dbReference type="InterPro" id="IPR000242">
    <property type="entry name" value="PTP_cat"/>
</dbReference>
<dbReference type="PANTHER" id="PTHR19134">
    <property type="entry name" value="RECEPTOR-TYPE TYROSINE-PROTEIN PHOSPHATASE"/>
    <property type="match status" value="1"/>
</dbReference>
<dbReference type="PANTHER" id="PTHR19134:SF527">
    <property type="entry name" value="TYROSINE-PROTEIN PHOSPHATASE NON-RECEPTOR TYPE 7"/>
    <property type="match status" value="1"/>
</dbReference>
<dbReference type="Pfam" id="PF00102">
    <property type="entry name" value="Y_phosphatase"/>
    <property type="match status" value="1"/>
</dbReference>
<dbReference type="SUPFAM" id="SSF52799">
    <property type="entry name" value="(Phosphotyrosine protein) phosphatases II"/>
    <property type="match status" value="1"/>
</dbReference>
<dbReference type="PROSITE" id="PS50055">
    <property type="entry name" value="TYR_PHOSPHATASE_PTP"/>
    <property type="match status" value="1"/>
</dbReference>
<accession>P28197</accession>
<name>PTP5_STYPL</name>
<evidence type="ECO:0000250" key="1"/>
<evidence type="ECO:0000255" key="2">
    <source>
        <dbReference type="PROSITE-ProRule" id="PRU00160"/>
    </source>
</evidence>
<evidence type="ECO:0000255" key="3">
    <source>
        <dbReference type="PROSITE-ProRule" id="PRU10044"/>
    </source>
</evidence>
<evidence type="ECO:0000305" key="4"/>
<gene>
    <name type="primary">STY-5</name>
</gene>
<comment type="catalytic activity">
    <reaction evidence="3">
        <text>O-phospho-L-tyrosyl-[protein] + H2O = L-tyrosyl-[protein] + phosphate</text>
        <dbReference type="Rhea" id="RHEA:10684"/>
        <dbReference type="Rhea" id="RHEA-COMP:10136"/>
        <dbReference type="Rhea" id="RHEA-COMP:20101"/>
        <dbReference type="ChEBI" id="CHEBI:15377"/>
        <dbReference type="ChEBI" id="CHEBI:43474"/>
        <dbReference type="ChEBI" id="CHEBI:46858"/>
        <dbReference type="ChEBI" id="CHEBI:61978"/>
        <dbReference type="EC" id="3.1.3.48"/>
    </reaction>
</comment>
<comment type="similarity">
    <text evidence="4">Belongs to the protein-tyrosine phosphatase family.</text>
</comment>
<reference key="1">
    <citation type="journal article" date="1991" name="Immunogenetics">
        <title>Protein tyrosine phosphatase domains from the protochordate Styela plicata.</title>
        <authorList>
            <person name="Matthews R.J."/>
            <person name="Flores E."/>
            <person name="Thomas M.L."/>
        </authorList>
    </citation>
    <scope>NUCLEOTIDE SEQUENCE [MRNA]</scope>
</reference>
<proteinExistence type="evidence at transcript level"/>
<protein>
    <recommendedName>
        <fullName>Tyrosine-protein phosphatase 5</fullName>
        <ecNumber>3.1.3.48</ecNumber>
    </recommendedName>
</protein>